<sequence length="271" mass="30328">MGHMVNAIAQIDEFVNLGANSIETDVSFDSSANPEYTYHGVPCDCRRWCKKWEYFNNFLKALRKATTPGDSKYHEKLVLVVFDLKTGSLYDNQASDAGKKLAKSLLQNYWNNGNNGGRAYIVLSIPNLAHYKLIAGFKEALTSEGHPELMDKVGYDFSGNDDIGDVANAYKEAGVTGHVWQSDGITNCLLRGLDRVRKAVANRDSSNGYVNKVYYWTVDKRQSTRDALDAGVDGIMTNYPDVIADVLNESAYKAKFRIASYDDNPWETFKN</sequence>
<organism>
    <name type="scientific">Loxosceles arizonica</name>
    <name type="common">Arizona brown spider</name>
    <dbReference type="NCBI Taxonomy" id="196454"/>
    <lineage>
        <taxon>Eukaryota</taxon>
        <taxon>Metazoa</taxon>
        <taxon>Ecdysozoa</taxon>
        <taxon>Arthropoda</taxon>
        <taxon>Chelicerata</taxon>
        <taxon>Arachnida</taxon>
        <taxon>Araneae</taxon>
        <taxon>Araneomorphae</taxon>
        <taxon>Haplogynae</taxon>
        <taxon>Scytodoidea</taxon>
        <taxon>Sicariidae</taxon>
        <taxon>Loxosceles</taxon>
    </lineage>
</organism>
<reference key="1">
    <citation type="journal article" date="2009" name="Mol. Biol. Evol.">
        <title>Molecular evolution, functional variation, and proposed nomenclature of the gene family that includes sphingomyelinase D in sicariid spider venoms.</title>
        <authorList>
            <person name="Binford G.J."/>
            <person name="Bodner M.R."/>
            <person name="Cordes M.H."/>
            <person name="Baldwin K.L."/>
            <person name="Rynerson M.R."/>
            <person name="Burns S.N."/>
            <person name="Zobel-Thropp P.A."/>
        </authorList>
    </citation>
    <scope>NUCLEOTIDE SEQUENCE [MRNA]</scope>
    <scope>NOMENCLATURE</scope>
    <source>
        <tissue>Venom gland</tissue>
    </source>
</reference>
<dbReference type="EC" id="4.6.1.-" evidence="4"/>
<dbReference type="EMBL" id="FJ171398">
    <property type="protein sequence ID" value="ACN48894.1"/>
    <property type="molecule type" value="mRNA"/>
</dbReference>
<dbReference type="SMR" id="C0JAW3"/>
<dbReference type="GO" id="GO:0005576">
    <property type="term" value="C:extracellular region"/>
    <property type="evidence" value="ECO:0007669"/>
    <property type="project" value="UniProtKB-SubCell"/>
</dbReference>
<dbReference type="GO" id="GO:0016829">
    <property type="term" value="F:lyase activity"/>
    <property type="evidence" value="ECO:0007669"/>
    <property type="project" value="UniProtKB-KW"/>
</dbReference>
<dbReference type="GO" id="GO:0046872">
    <property type="term" value="F:metal ion binding"/>
    <property type="evidence" value="ECO:0007669"/>
    <property type="project" value="UniProtKB-KW"/>
</dbReference>
<dbReference type="GO" id="GO:0008081">
    <property type="term" value="F:phosphoric diester hydrolase activity"/>
    <property type="evidence" value="ECO:0007669"/>
    <property type="project" value="InterPro"/>
</dbReference>
<dbReference type="GO" id="GO:0090729">
    <property type="term" value="F:toxin activity"/>
    <property type="evidence" value="ECO:0007669"/>
    <property type="project" value="UniProtKB-KW"/>
</dbReference>
<dbReference type="GO" id="GO:0031640">
    <property type="term" value="P:killing of cells of another organism"/>
    <property type="evidence" value="ECO:0007669"/>
    <property type="project" value="UniProtKB-KW"/>
</dbReference>
<dbReference type="GO" id="GO:0016042">
    <property type="term" value="P:lipid catabolic process"/>
    <property type="evidence" value="ECO:0007669"/>
    <property type="project" value="UniProtKB-KW"/>
</dbReference>
<dbReference type="CDD" id="cd08576">
    <property type="entry name" value="GDPD_like_SMaseD_PLD"/>
    <property type="match status" value="1"/>
</dbReference>
<dbReference type="Gene3D" id="3.20.20.190">
    <property type="entry name" value="Phosphatidylinositol (PI) phosphodiesterase"/>
    <property type="match status" value="1"/>
</dbReference>
<dbReference type="InterPro" id="IPR017946">
    <property type="entry name" value="PLC-like_Pdiesterase_TIM-brl"/>
</dbReference>
<dbReference type="Pfam" id="PF13653">
    <property type="entry name" value="GDPD_2"/>
    <property type="match status" value="1"/>
</dbReference>
<dbReference type="SUPFAM" id="SSF51695">
    <property type="entry name" value="PLC-like phosphodiesterases"/>
    <property type="match status" value="1"/>
</dbReference>
<comment type="function">
    <text evidence="1 3">Dermonecrotic toxins cleave the phosphodiester linkage between the phosphate and headgroup of certain phospholipids (sphingolipid and lysolipid substrates), forming an alcohol (often choline) and a cyclic phosphate (By similarity). This toxin acts on sphingomyelin (SM) (By similarity). It may also act on ceramide phosphoethanolamine (CPE), lysophosphatidylcholine (LPC) and lysophosphatidylethanolamine (LPE), but not on lysophosphatidylserine (LPS), and lysophosphatidylglycerol (LPG) (By similarity). It acts by transphosphatidylation, releasing exclusively cyclic phosphate products as second products (By similarity). Induces dermonecrosis, hemolysis, increased vascular permeability, edema, inflammatory response, and platelet aggregation (By similarity).</text>
</comment>
<comment type="catalytic activity">
    <reaction evidence="1">
        <text>an N-(acyl)-sphingosylphosphocholine = an N-(acyl)-sphingosyl-1,3-cyclic phosphate + choline</text>
        <dbReference type="Rhea" id="RHEA:60652"/>
        <dbReference type="ChEBI" id="CHEBI:15354"/>
        <dbReference type="ChEBI" id="CHEBI:64583"/>
        <dbReference type="ChEBI" id="CHEBI:143892"/>
    </reaction>
</comment>
<comment type="catalytic activity">
    <reaction evidence="1">
        <text>an N-(acyl)-sphingosylphosphoethanolamine = an N-(acyl)-sphingosyl-1,3-cyclic phosphate + ethanolamine</text>
        <dbReference type="Rhea" id="RHEA:60648"/>
        <dbReference type="ChEBI" id="CHEBI:57603"/>
        <dbReference type="ChEBI" id="CHEBI:143891"/>
        <dbReference type="ChEBI" id="CHEBI:143892"/>
    </reaction>
</comment>
<comment type="catalytic activity">
    <reaction evidence="1">
        <text>a 1-acyl-sn-glycero-3-phosphocholine = a 1-acyl-sn-glycero-2,3-cyclic phosphate + choline</text>
        <dbReference type="Rhea" id="RHEA:60700"/>
        <dbReference type="ChEBI" id="CHEBI:15354"/>
        <dbReference type="ChEBI" id="CHEBI:58168"/>
        <dbReference type="ChEBI" id="CHEBI:143947"/>
    </reaction>
</comment>
<comment type="catalytic activity">
    <reaction evidence="1">
        <text>a 1-acyl-sn-glycero-3-phosphoethanolamine = a 1-acyl-sn-glycero-2,3-cyclic phosphate + ethanolamine</text>
        <dbReference type="Rhea" id="RHEA:60704"/>
        <dbReference type="ChEBI" id="CHEBI:57603"/>
        <dbReference type="ChEBI" id="CHEBI:64381"/>
        <dbReference type="ChEBI" id="CHEBI:143947"/>
    </reaction>
</comment>
<comment type="cofactor">
    <cofactor evidence="5">
        <name>Mg(2+)</name>
        <dbReference type="ChEBI" id="CHEBI:18420"/>
    </cofactor>
    <text evidence="5">Binds 1 Mg(2+) ion per subunit.</text>
</comment>
<comment type="subcellular location">
    <subcellularLocation>
        <location evidence="9">Secreted</location>
    </subcellularLocation>
</comment>
<comment type="tissue specificity">
    <text evidence="9">Expressed by the venom gland.</text>
</comment>
<comment type="similarity">
    <text evidence="8">Belongs to the arthropod phospholipase D family. Class II subfamily.</text>
</comment>
<comment type="caution">
    <text evidence="1 2 4">The most common activity assay for dermonecrotic toxins detects enzymatic activity by monitoring choline release from substrate. Liberation of choline from sphingomyelin (SM) or lysophosphatidylcholine (LPC) is commonly assumed to result from substrate hydrolysis, giving either ceramide-1-phosphate (C1P) or lysophosphatidic acid (LPA), respectively, as a second product. However, two studies from Lajoie and colleagues (2013 and 2015) report the observation of exclusive formation of cyclic phosphate products as second products, resulting from intramolecular transphosphatidylation. Cyclic phosphates have vastly different biological properties from their monoester counterparts, and they may be relevant to the pathology of brown spider envenomation.</text>
</comment>
<feature type="chain" id="PRO_0000392791" description="Dermonecrotic toxin LarSicTox-alphaIB1c">
    <location>
        <begin position="1" status="less than"/>
        <end position="271"/>
    </location>
</feature>
<feature type="active site" evidence="5">
    <location>
        <position position="3"/>
    </location>
</feature>
<feature type="active site" description="Nucleophile" evidence="5">
    <location>
        <position position="39"/>
    </location>
</feature>
<feature type="binding site" evidence="5">
    <location>
        <position position="23"/>
    </location>
    <ligand>
        <name>Mg(2+)</name>
        <dbReference type="ChEBI" id="CHEBI:18420"/>
    </ligand>
</feature>
<feature type="binding site" evidence="5">
    <location>
        <position position="25"/>
    </location>
    <ligand>
        <name>Mg(2+)</name>
        <dbReference type="ChEBI" id="CHEBI:18420"/>
    </ligand>
</feature>
<feature type="binding site" evidence="5">
    <location>
        <position position="83"/>
    </location>
    <ligand>
        <name>Mg(2+)</name>
        <dbReference type="ChEBI" id="CHEBI:18420"/>
    </ligand>
</feature>
<feature type="glycosylation site" description="N-linked (GlcNAc...) asparagine" evidence="6">
    <location>
        <position position="248"/>
    </location>
</feature>
<feature type="disulfide bond" evidence="3">
    <location>
        <begin position="43"/>
        <end position="49"/>
    </location>
</feature>
<feature type="disulfide bond" evidence="3">
    <location>
        <begin position="45"/>
        <end position="188"/>
    </location>
</feature>
<feature type="non-terminal residue">
    <location>
        <position position="1"/>
    </location>
</feature>
<accession>C0JAW3</accession>
<proteinExistence type="evidence at transcript level"/>
<keyword id="KW-0204">Cytolysis</keyword>
<keyword id="KW-1061">Dermonecrotic toxin</keyword>
<keyword id="KW-1015">Disulfide bond</keyword>
<keyword id="KW-0325">Glycoprotein</keyword>
<keyword id="KW-0354">Hemolysis</keyword>
<keyword id="KW-0442">Lipid degradation</keyword>
<keyword id="KW-0443">Lipid metabolism</keyword>
<keyword id="KW-0456">Lyase</keyword>
<keyword id="KW-0460">Magnesium</keyword>
<keyword id="KW-0479">Metal-binding</keyword>
<keyword id="KW-0964">Secreted</keyword>
<keyword id="KW-0800">Toxin</keyword>
<name>A1KC_LOXAR</name>
<evidence type="ECO:0000250" key="1">
    <source>
        <dbReference type="UniProtKB" id="A0A0D4WTV1"/>
    </source>
</evidence>
<evidence type="ECO:0000250" key="2">
    <source>
        <dbReference type="UniProtKB" id="A0A0D4WV12"/>
    </source>
</evidence>
<evidence type="ECO:0000250" key="3">
    <source>
        <dbReference type="UniProtKB" id="P0CE80"/>
    </source>
</evidence>
<evidence type="ECO:0000250" key="4">
    <source>
        <dbReference type="UniProtKB" id="Q4ZFU2"/>
    </source>
</evidence>
<evidence type="ECO:0000250" key="5">
    <source>
        <dbReference type="UniProtKB" id="Q8I914"/>
    </source>
</evidence>
<evidence type="ECO:0000255" key="6"/>
<evidence type="ECO:0000303" key="7">
    <source>
    </source>
</evidence>
<evidence type="ECO:0000305" key="8"/>
<evidence type="ECO:0000305" key="9">
    <source>
    </source>
</evidence>
<protein>
    <recommendedName>
        <fullName evidence="7">Dermonecrotic toxin LarSicTox-alphaIB1c</fullName>
        <ecNumber evidence="4">4.6.1.-</ecNumber>
    </recommendedName>
    <alternativeName>
        <fullName>Phospholipase D</fullName>
        <shortName>PLD</shortName>
    </alternativeName>
    <alternativeName>
        <fullName>Sphingomyelin phosphodiesterase D</fullName>
        <shortName>SMD</shortName>
        <shortName>SMase D</shortName>
        <shortName>Sphingomyelinase D</shortName>
    </alternativeName>
</protein>